<gene>
    <name evidence="2" type="primary">argF</name>
    <name type="ordered locus">alr4907</name>
</gene>
<evidence type="ECO:0000250" key="1"/>
<evidence type="ECO:0000255" key="2">
    <source>
        <dbReference type="HAMAP-Rule" id="MF_01109"/>
    </source>
</evidence>
<sequence>MAALLGRDLLSLADLTPTELQELLQLATQLKSQQLKLRCNKVLGLLFSKASTRTRVSFTVAMYQLGGQVIDLNPNVTQVSRGEPVQDTARVLERYLDVLAIRTFEQQELATFAEYAKIPVINALTDLEHPCQILADLLTVQECFDSISGLTLTYVGDGNNVANSLMLGCALAGMNVRIATPSGYEPNPQVVAQAQAIADGKTEILLTNDPDLATKGASVLYTDVWASMGQEAEADDRFPIFQPYQISEQLLSLAEPNAIVLHCLPAHRGEEITEEVIEGSQSRVWQQAENRLHVQKALLASILGAE</sequence>
<organism>
    <name type="scientific">Nostoc sp. (strain PCC 7120 / SAG 25.82 / UTEX 2576)</name>
    <dbReference type="NCBI Taxonomy" id="103690"/>
    <lineage>
        <taxon>Bacteria</taxon>
        <taxon>Bacillati</taxon>
        <taxon>Cyanobacteriota</taxon>
        <taxon>Cyanophyceae</taxon>
        <taxon>Nostocales</taxon>
        <taxon>Nostocaceae</taxon>
        <taxon>Nostoc</taxon>
    </lineage>
</organism>
<proteinExistence type="inferred from homology"/>
<name>OTC_NOSS1</name>
<reference key="1">
    <citation type="journal article" date="2001" name="DNA Res.">
        <title>Complete genomic sequence of the filamentous nitrogen-fixing cyanobacterium Anabaena sp. strain PCC 7120.</title>
        <authorList>
            <person name="Kaneko T."/>
            <person name="Nakamura Y."/>
            <person name="Wolk C.P."/>
            <person name="Kuritz T."/>
            <person name="Sasamoto S."/>
            <person name="Watanabe A."/>
            <person name="Iriguchi M."/>
            <person name="Ishikawa A."/>
            <person name="Kawashima K."/>
            <person name="Kimura T."/>
            <person name="Kishida Y."/>
            <person name="Kohara M."/>
            <person name="Matsumoto M."/>
            <person name="Matsuno A."/>
            <person name="Muraki A."/>
            <person name="Nakazaki N."/>
            <person name="Shimpo S."/>
            <person name="Sugimoto M."/>
            <person name="Takazawa M."/>
            <person name="Yamada M."/>
            <person name="Yasuda M."/>
            <person name="Tabata S."/>
        </authorList>
    </citation>
    <scope>NUCLEOTIDE SEQUENCE [LARGE SCALE GENOMIC DNA]</scope>
    <source>
        <strain>PCC 7120 / SAG 25.82 / UTEX 2576</strain>
    </source>
</reference>
<keyword id="KW-0028">Amino-acid biosynthesis</keyword>
<keyword id="KW-0055">Arginine biosynthesis</keyword>
<keyword id="KW-0963">Cytoplasm</keyword>
<keyword id="KW-1185">Reference proteome</keyword>
<keyword id="KW-0808">Transferase</keyword>
<feature type="chain" id="PRO_0000112873" description="Ornithine carbamoyltransferase">
    <location>
        <begin position="1"/>
        <end position="306"/>
    </location>
</feature>
<feature type="binding site" evidence="2">
    <location>
        <begin position="51"/>
        <end position="54"/>
    </location>
    <ligand>
        <name>carbamoyl phosphate</name>
        <dbReference type="ChEBI" id="CHEBI:58228"/>
    </ligand>
</feature>
<feature type="binding site" evidence="2">
    <location>
        <position position="78"/>
    </location>
    <ligand>
        <name>carbamoyl phosphate</name>
        <dbReference type="ChEBI" id="CHEBI:58228"/>
    </ligand>
</feature>
<feature type="binding site" evidence="2">
    <location>
        <position position="102"/>
    </location>
    <ligand>
        <name>carbamoyl phosphate</name>
        <dbReference type="ChEBI" id="CHEBI:58228"/>
    </ligand>
</feature>
<feature type="binding site" evidence="2">
    <location>
        <begin position="129"/>
        <end position="132"/>
    </location>
    <ligand>
        <name>carbamoyl phosphate</name>
        <dbReference type="ChEBI" id="CHEBI:58228"/>
    </ligand>
</feature>
<feature type="binding site" evidence="2">
    <location>
        <position position="160"/>
    </location>
    <ligand>
        <name>L-ornithine</name>
        <dbReference type="ChEBI" id="CHEBI:46911"/>
    </ligand>
</feature>
<feature type="binding site" evidence="2">
    <location>
        <position position="223"/>
    </location>
    <ligand>
        <name>L-ornithine</name>
        <dbReference type="ChEBI" id="CHEBI:46911"/>
    </ligand>
</feature>
<feature type="binding site" evidence="2">
    <location>
        <begin position="227"/>
        <end position="228"/>
    </location>
    <ligand>
        <name>L-ornithine</name>
        <dbReference type="ChEBI" id="CHEBI:46911"/>
    </ligand>
</feature>
<feature type="binding site" evidence="2">
    <location>
        <begin position="263"/>
        <end position="264"/>
    </location>
    <ligand>
        <name>carbamoyl phosphate</name>
        <dbReference type="ChEBI" id="CHEBI:58228"/>
    </ligand>
</feature>
<feature type="binding site" evidence="2">
    <location>
        <position position="291"/>
    </location>
    <ligand>
        <name>carbamoyl phosphate</name>
        <dbReference type="ChEBI" id="CHEBI:58228"/>
    </ligand>
</feature>
<accession>Q8YMM6</accession>
<dbReference type="EC" id="2.1.3.3" evidence="2"/>
<dbReference type="EMBL" id="BA000019">
    <property type="protein sequence ID" value="BAB76606.1"/>
    <property type="molecule type" value="Genomic_DNA"/>
</dbReference>
<dbReference type="PIR" id="AC2419">
    <property type="entry name" value="AC2419"/>
</dbReference>
<dbReference type="RefSeq" id="WP_010999033.1">
    <property type="nucleotide sequence ID" value="NZ_RSCN01000018.1"/>
</dbReference>
<dbReference type="SMR" id="Q8YMM6"/>
<dbReference type="STRING" id="103690.gene:10496962"/>
<dbReference type="KEGG" id="ana:alr4907"/>
<dbReference type="eggNOG" id="COG0078">
    <property type="taxonomic scope" value="Bacteria"/>
</dbReference>
<dbReference type="OrthoDB" id="9802587at2"/>
<dbReference type="UniPathway" id="UPA00068">
    <property type="reaction ID" value="UER00112"/>
</dbReference>
<dbReference type="Proteomes" id="UP000002483">
    <property type="component" value="Chromosome"/>
</dbReference>
<dbReference type="GO" id="GO:0005737">
    <property type="term" value="C:cytoplasm"/>
    <property type="evidence" value="ECO:0007669"/>
    <property type="project" value="UniProtKB-SubCell"/>
</dbReference>
<dbReference type="GO" id="GO:0016597">
    <property type="term" value="F:amino acid binding"/>
    <property type="evidence" value="ECO:0007669"/>
    <property type="project" value="InterPro"/>
</dbReference>
<dbReference type="GO" id="GO:0004585">
    <property type="term" value="F:ornithine carbamoyltransferase activity"/>
    <property type="evidence" value="ECO:0007669"/>
    <property type="project" value="UniProtKB-UniRule"/>
</dbReference>
<dbReference type="GO" id="GO:0042450">
    <property type="term" value="P:arginine biosynthetic process via ornithine"/>
    <property type="evidence" value="ECO:0007669"/>
    <property type="project" value="TreeGrafter"/>
</dbReference>
<dbReference type="GO" id="GO:0019240">
    <property type="term" value="P:citrulline biosynthetic process"/>
    <property type="evidence" value="ECO:0007669"/>
    <property type="project" value="TreeGrafter"/>
</dbReference>
<dbReference type="GO" id="GO:0006526">
    <property type="term" value="P:L-arginine biosynthetic process"/>
    <property type="evidence" value="ECO:0007669"/>
    <property type="project" value="UniProtKB-UniRule"/>
</dbReference>
<dbReference type="FunFam" id="3.40.50.1370:FF:000008">
    <property type="entry name" value="Ornithine carbamoyltransferase"/>
    <property type="match status" value="1"/>
</dbReference>
<dbReference type="Gene3D" id="3.40.50.1370">
    <property type="entry name" value="Aspartate/ornithine carbamoyltransferase"/>
    <property type="match status" value="2"/>
</dbReference>
<dbReference type="HAMAP" id="MF_01109">
    <property type="entry name" value="OTCase"/>
    <property type="match status" value="1"/>
</dbReference>
<dbReference type="InterPro" id="IPR006132">
    <property type="entry name" value="Asp/Orn_carbamoyltranf_P-bd"/>
</dbReference>
<dbReference type="InterPro" id="IPR006130">
    <property type="entry name" value="Asp/Orn_carbamoylTrfase"/>
</dbReference>
<dbReference type="InterPro" id="IPR036901">
    <property type="entry name" value="Asp/Orn_carbamoylTrfase_sf"/>
</dbReference>
<dbReference type="InterPro" id="IPR006131">
    <property type="entry name" value="Asp_carbamoyltransf_Asp/Orn-bd"/>
</dbReference>
<dbReference type="InterPro" id="IPR002292">
    <property type="entry name" value="Orn/put_carbamltrans"/>
</dbReference>
<dbReference type="InterPro" id="IPR024904">
    <property type="entry name" value="OTCase_ArgI"/>
</dbReference>
<dbReference type="NCBIfam" id="TIGR00658">
    <property type="entry name" value="orni_carb_tr"/>
    <property type="match status" value="1"/>
</dbReference>
<dbReference type="NCBIfam" id="NF001986">
    <property type="entry name" value="PRK00779.1"/>
    <property type="match status" value="1"/>
</dbReference>
<dbReference type="PANTHER" id="PTHR45753">
    <property type="entry name" value="ORNITHINE CARBAMOYLTRANSFERASE, MITOCHONDRIAL"/>
    <property type="match status" value="1"/>
</dbReference>
<dbReference type="PANTHER" id="PTHR45753:SF3">
    <property type="entry name" value="ORNITHINE TRANSCARBAMYLASE, MITOCHONDRIAL"/>
    <property type="match status" value="1"/>
</dbReference>
<dbReference type="Pfam" id="PF00185">
    <property type="entry name" value="OTCace"/>
    <property type="match status" value="1"/>
</dbReference>
<dbReference type="Pfam" id="PF02729">
    <property type="entry name" value="OTCace_N"/>
    <property type="match status" value="1"/>
</dbReference>
<dbReference type="PRINTS" id="PR00100">
    <property type="entry name" value="AOTCASE"/>
</dbReference>
<dbReference type="PRINTS" id="PR00102">
    <property type="entry name" value="OTCASE"/>
</dbReference>
<dbReference type="SUPFAM" id="SSF53671">
    <property type="entry name" value="Aspartate/ornithine carbamoyltransferase"/>
    <property type="match status" value="1"/>
</dbReference>
<dbReference type="PROSITE" id="PS00097">
    <property type="entry name" value="CARBAMOYLTRANSFERASE"/>
    <property type="match status" value="1"/>
</dbReference>
<protein>
    <recommendedName>
        <fullName evidence="2">Ornithine carbamoyltransferase</fullName>
        <shortName evidence="2">OTCase</shortName>
        <ecNumber evidence="2">2.1.3.3</ecNumber>
    </recommendedName>
</protein>
<comment type="function">
    <text evidence="1">Reversibly catalyzes the transfer of the carbamoyl group from carbamoyl phosphate (CP) to the N(epsilon) atom of ornithine (ORN) to produce L-citrulline.</text>
</comment>
<comment type="catalytic activity">
    <reaction evidence="2">
        <text>carbamoyl phosphate + L-ornithine = L-citrulline + phosphate + H(+)</text>
        <dbReference type="Rhea" id="RHEA:19513"/>
        <dbReference type="ChEBI" id="CHEBI:15378"/>
        <dbReference type="ChEBI" id="CHEBI:43474"/>
        <dbReference type="ChEBI" id="CHEBI:46911"/>
        <dbReference type="ChEBI" id="CHEBI:57743"/>
        <dbReference type="ChEBI" id="CHEBI:58228"/>
        <dbReference type="EC" id="2.1.3.3"/>
    </reaction>
</comment>
<comment type="pathway">
    <text evidence="2">Amino-acid biosynthesis; L-arginine biosynthesis; L-arginine from L-ornithine and carbamoyl phosphate: step 1/3.</text>
</comment>
<comment type="subcellular location">
    <subcellularLocation>
        <location evidence="2">Cytoplasm</location>
    </subcellularLocation>
</comment>
<comment type="similarity">
    <text evidence="2">Belongs to the aspartate/ornithine carbamoyltransferase superfamily. OTCase family.</text>
</comment>